<sequence length="38" mass="4434">MKVRASVKKLCRNCKIIRREGVVRVICSAEPRHKQRQG</sequence>
<gene>
    <name evidence="1" type="primary">rpmJ</name>
    <name type="ordered locus">PFLU_5506</name>
</gene>
<comment type="similarity">
    <text evidence="1">Belongs to the bacterial ribosomal protein bL36 family.</text>
</comment>
<keyword id="KW-0687">Ribonucleoprotein</keyword>
<keyword id="KW-0689">Ribosomal protein</keyword>
<feature type="chain" id="PRO_1000204557" description="Large ribosomal subunit protein bL36">
    <location>
        <begin position="1"/>
        <end position="38"/>
    </location>
</feature>
<name>RL36_PSEFS</name>
<protein>
    <recommendedName>
        <fullName evidence="1">Large ribosomal subunit protein bL36</fullName>
    </recommendedName>
    <alternativeName>
        <fullName evidence="2">50S ribosomal protein L36</fullName>
    </alternativeName>
</protein>
<proteinExistence type="inferred from homology"/>
<evidence type="ECO:0000255" key="1">
    <source>
        <dbReference type="HAMAP-Rule" id="MF_00251"/>
    </source>
</evidence>
<evidence type="ECO:0000305" key="2"/>
<reference key="1">
    <citation type="journal article" date="2009" name="Genome Biol.">
        <title>Genomic and genetic analyses of diversity and plant interactions of Pseudomonas fluorescens.</title>
        <authorList>
            <person name="Silby M.W."/>
            <person name="Cerdeno-Tarraga A.M."/>
            <person name="Vernikos G.S."/>
            <person name="Giddens S.R."/>
            <person name="Jackson R.W."/>
            <person name="Preston G.M."/>
            <person name="Zhang X.-X."/>
            <person name="Moon C.D."/>
            <person name="Gehrig S.M."/>
            <person name="Godfrey S.A.C."/>
            <person name="Knight C.G."/>
            <person name="Malone J.G."/>
            <person name="Robinson Z."/>
            <person name="Spiers A.J."/>
            <person name="Harris S."/>
            <person name="Challis G.L."/>
            <person name="Yaxley A.M."/>
            <person name="Harris D."/>
            <person name="Seeger K."/>
            <person name="Murphy L."/>
            <person name="Rutter S."/>
            <person name="Squares R."/>
            <person name="Quail M.A."/>
            <person name="Saunders E."/>
            <person name="Mavromatis K."/>
            <person name="Brettin T.S."/>
            <person name="Bentley S.D."/>
            <person name="Hothersall J."/>
            <person name="Stephens E."/>
            <person name="Thomas C.M."/>
            <person name="Parkhill J."/>
            <person name="Levy S.B."/>
            <person name="Rainey P.B."/>
            <person name="Thomson N.R."/>
        </authorList>
    </citation>
    <scope>NUCLEOTIDE SEQUENCE [LARGE SCALE GENOMIC DNA]</scope>
    <source>
        <strain>SBW25</strain>
    </source>
</reference>
<accession>C3K2V5</accession>
<dbReference type="EMBL" id="AM181176">
    <property type="protein sequence ID" value="CAY52730.1"/>
    <property type="molecule type" value="Genomic_DNA"/>
</dbReference>
<dbReference type="RefSeq" id="WP_002555468.1">
    <property type="nucleotide sequence ID" value="NC_012660.1"/>
</dbReference>
<dbReference type="SMR" id="C3K2V5"/>
<dbReference type="GeneID" id="98285417"/>
<dbReference type="eggNOG" id="COG0257">
    <property type="taxonomic scope" value="Bacteria"/>
</dbReference>
<dbReference type="HOGENOM" id="CLU_135723_6_2_6"/>
<dbReference type="OrthoDB" id="9802520at2"/>
<dbReference type="GO" id="GO:0005737">
    <property type="term" value="C:cytoplasm"/>
    <property type="evidence" value="ECO:0007669"/>
    <property type="project" value="UniProtKB-ARBA"/>
</dbReference>
<dbReference type="GO" id="GO:1990904">
    <property type="term" value="C:ribonucleoprotein complex"/>
    <property type="evidence" value="ECO:0007669"/>
    <property type="project" value="UniProtKB-KW"/>
</dbReference>
<dbReference type="GO" id="GO:0005840">
    <property type="term" value="C:ribosome"/>
    <property type="evidence" value="ECO:0007669"/>
    <property type="project" value="UniProtKB-KW"/>
</dbReference>
<dbReference type="GO" id="GO:0003735">
    <property type="term" value="F:structural constituent of ribosome"/>
    <property type="evidence" value="ECO:0007669"/>
    <property type="project" value="InterPro"/>
</dbReference>
<dbReference type="GO" id="GO:0006412">
    <property type="term" value="P:translation"/>
    <property type="evidence" value="ECO:0007669"/>
    <property type="project" value="UniProtKB-UniRule"/>
</dbReference>
<dbReference type="HAMAP" id="MF_00251">
    <property type="entry name" value="Ribosomal_bL36"/>
    <property type="match status" value="1"/>
</dbReference>
<dbReference type="InterPro" id="IPR000473">
    <property type="entry name" value="Ribosomal_bL36"/>
</dbReference>
<dbReference type="InterPro" id="IPR035977">
    <property type="entry name" value="Ribosomal_bL36_sp"/>
</dbReference>
<dbReference type="NCBIfam" id="TIGR01022">
    <property type="entry name" value="rpmJ_bact"/>
    <property type="match status" value="1"/>
</dbReference>
<dbReference type="PANTHER" id="PTHR42888">
    <property type="entry name" value="50S RIBOSOMAL PROTEIN L36, CHLOROPLASTIC"/>
    <property type="match status" value="1"/>
</dbReference>
<dbReference type="PANTHER" id="PTHR42888:SF1">
    <property type="entry name" value="LARGE RIBOSOMAL SUBUNIT PROTEIN BL36C"/>
    <property type="match status" value="1"/>
</dbReference>
<dbReference type="Pfam" id="PF00444">
    <property type="entry name" value="Ribosomal_L36"/>
    <property type="match status" value="1"/>
</dbReference>
<dbReference type="SUPFAM" id="SSF57840">
    <property type="entry name" value="Ribosomal protein L36"/>
    <property type="match status" value="1"/>
</dbReference>
<dbReference type="PROSITE" id="PS00828">
    <property type="entry name" value="RIBOSOMAL_L36"/>
    <property type="match status" value="1"/>
</dbReference>
<organism>
    <name type="scientific">Pseudomonas fluorescens (strain SBW25)</name>
    <dbReference type="NCBI Taxonomy" id="216595"/>
    <lineage>
        <taxon>Bacteria</taxon>
        <taxon>Pseudomonadati</taxon>
        <taxon>Pseudomonadota</taxon>
        <taxon>Gammaproteobacteria</taxon>
        <taxon>Pseudomonadales</taxon>
        <taxon>Pseudomonadaceae</taxon>
        <taxon>Pseudomonas</taxon>
    </lineage>
</organism>